<organism>
    <name type="scientific">Lactobacillus gasseri (strain ATCC 33323 / DSM 20243 / BCRC 14619 / CIP 102991 / JCM 1131 / KCTC 3163 / NCIMB 11718 / NCTC 13722 / AM63)</name>
    <dbReference type="NCBI Taxonomy" id="324831"/>
    <lineage>
        <taxon>Bacteria</taxon>
        <taxon>Bacillati</taxon>
        <taxon>Bacillota</taxon>
        <taxon>Bacilli</taxon>
        <taxon>Lactobacillales</taxon>
        <taxon>Lactobacillaceae</taxon>
        <taxon>Lactobacillus</taxon>
    </lineage>
</organism>
<dbReference type="EC" id="3.6.5.-" evidence="1"/>
<dbReference type="EMBL" id="CP000413">
    <property type="protein sequence ID" value="ABJ60261.1"/>
    <property type="molecule type" value="Genomic_DNA"/>
</dbReference>
<dbReference type="SMR" id="Q043W1"/>
<dbReference type="GeneID" id="29638936"/>
<dbReference type="KEGG" id="lga:LGAS_0872"/>
<dbReference type="HOGENOM" id="CLU_011747_2_1_9"/>
<dbReference type="BioCyc" id="LGAS324831:G1G6Y-865-MONOMER"/>
<dbReference type="Proteomes" id="UP000000664">
    <property type="component" value="Chromosome"/>
</dbReference>
<dbReference type="GO" id="GO:0005737">
    <property type="term" value="C:cytoplasm"/>
    <property type="evidence" value="ECO:0007669"/>
    <property type="project" value="UniProtKB-SubCell"/>
</dbReference>
<dbReference type="GO" id="GO:0005525">
    <property type="term" value="F:GTP binding"/>
    <property type="evidence" value="ECO:0007669"/>
    <property type="project" value="UniProtKB-UniRule"/>
</dbReference>
<dbReference type="GO" id="GO:0003924">
    <property type="term" value="F:GTPase activity"/>
    <property type="evidence" value="ECO:0007669"/>
    <property type="project" value="UniProtKB-UniRule"/>
</dbReference>
<dbReference type="GO" id="GO:0000287">
    <property type="term" value="F:magnesium ion binding"/>
    <property type="evidence" value="ECO:0007669"/>
    <property type="project" value="InterPro"/>
</dbReference>
<dbReference type="GO" id="GO:0042254">
    <property type="term" value="P:ribosome biogenesis"/>
    <property type="evidence" value="ECO:0007669"/>
    <property type="project" value="UniProtKB-UniRule"/>
</dbReference>
<dbReference type="CDD" id="cd01898">
    <property type="entry name" value="Obg"/>
    <property type="match status" value="1"/>
</dbReference>
<dbReference type="FunFam" id="2.70.210.12:FF:000001">
    <property type="entry name" value="GTPase Obg"/>
    <property type="match status" value="1"/>
</dbReference>
<dbReference type="Gene3D" id="3.30.300.350">
    <property type="entry name" value="GTP-binding protein OBG, C-terminal domain"/>
    <property type="match status" value="1"/>
</dbReference>
<dbReference type="Gene3D" id="2.70.210.12">
    <property type="entry name" value="GTP1/OBG domain"/>
    <property type="match status" value="1"/>
</dbReference>
<dbReference type="Gene3D" id="3.40.50.300">
    <property type="entry name" value="P-loop containing nucleotide triphosphate hydrolases"/>
    <property type="match status" value="1"/>
</dbReference>
<dbReference type="HAMAP" id="MF_01454">
    <property type="entry name" value="GTPase_Obg"/>
    <property type="match status" value="1"/>
</dbReference>
<dbReference type="InterPro" id="IPR031167">
    <property type="entry name" value="G_OBG"/>
</dbReference>
<dbReference type="InterPro" id="IPR006073">
    <property type="entry name" value="GTP-bd"/>
</dbReference>
<dbReference type="InterPro" id="IPR014100">
    <property type="entry name" value="GTP-bd_Obg/CgtA"/>
</dbReference>
<dbReference type="InterPro" id="IPR036346">
    <property type="entry name" value="GTP-bd_prot_GTP1/OBG_C_sf"/>
</dbReference>
<dbReference type="InterPro" id="IPR006074">
    <property type="entry name" value="GTP1-OBG_CS"/>
</dbReference>
<dbReference type="InterPro" id="IPR006169">
    <property type="entry name" value="GTP1_OBG_dom"/>
</dbReference>
<dbReference type="InterPro" id="IPR036726">
    <property type="entry name" value="GTP1_OBG_dom_sf"/>
</dbReference>
<dbReference type="InterPro" id="IPR045086">
    <property type="entry name" value="OBG_GTPase"/>
</dbReference>
<dbReference type="InterPro" id="IPR015349">
    <property type="entry name" value="OCT_dom"/>
</dbReference>
<dbReference type="InterPro" id="IPR027417">
    <property type="entry name" value="P-loop_NTPase"/>
</dbReference>
<dbReference type="NCBIfam" id="TIGR02729">
    <property type="entry name" value="Obg_CgtA"/>
    <property type="match status" value="1"/>
</dbReference>
<dbReference type="NCBIfam" id="TIGR03595">
    <property type="entry name" value="Obg_CgtA_exten"/>
    <property type="match status" value="1"/>
</dbReference>
<dbReference type="NCBIfam" id="NF008954">
    <property type="entry name" value="PRK12296.1"/>
    <property type="match status" value="1"/>
</dbReference>
<dbReference type="NCBIfam" id="NF008955">
    <property type="entry name" value="PRK12297.1"/>
    <property type="match status" value="1"/>
</dbReference>
<dbReference type="NCBIfam" id="NF008956">
    <property type="entry name" value="PRK12299.1"/>
    <property type="match status" value="1"/>
</dbReference>
<dbReference type="PANTHER" id="PTHR11702">
    <property type="entry name" value="DEVELOPMENTALLY REGULATED GTP-BINDING PROTEIN-RELATED"/>
    <property type="match status" value="1"/>
</dbReference>
<dbReference type="PANTHER" id="PTHR11702:SF31">
    <property type="entry name" value="MITOCHONDRIAL RIBOSOME-ASSOCIATED GTPASE 2"/>
    <property type="match status" value="1"/>
</dbReference>
<dbReference type="Pfam" id="PF09269">
    <property type="entry name" value="DUF1967"/>
    <property type="match status" value="1"/>
</dbReference>
<dbReference type="Pfam" id="PF01018">
    <property type="entry name" value="GTP1_OBG"/>
    <property type="match status" value="1"/>
</dbReference>
<dbReference type="Pfam" id="PF01926">
    <property type="entry name" value="MMR_HSR1"/>
    <property type="match status" value="1"/>
</dbReference>
<dbReference type="PIRSF" id="PIRSF002401">
    <property type="entry name" value="GTP_bd_Obg/CgtA"/>
    <property type="match status" value="1"/>
</dbReference>
<dbReference type="PRINTS" id="PR00326">
    <property type="entry name" value="GTP1OBG"/>
</dbReference>
<dbReference type="SUPFAM" id="SSF102741">
    <property type="entry name" value="Obg GTP-binding protein C-terminal domain"/>
    <property type="match status" value="1"/>
</dbReference>
<dbReference type="SUPFAM" id="SSF82051">
    <property type="entry name" value="Obg GTP-binding protein N-terminal domain"/>
    <property type="match status" value="1"/>
</dbReference>
<dbReference type="SUPFAM" id="SSF52540">
    <property type="entry name" value="P-loop containing nucleoside triphosphate hydrolases"/>
    <property type="match status" value="1"/>
</dbReference>
<dbReference type="PROSITE" id="PS51710">
    <property type="entry name" value="G_OBG"/>
    <property type="match status" value="1"/>
</dbReference>
<dbReference type="PROSITE" id="PS00905">
    <property type="entry name" value="GTP1_OBG"/>
    <property type="match status" value="1"/>
</dbReference>
<dbReference type="PROSITE" id="PS51883">
    <property type="entry name" value="OBG"/>
    <property type="match status" value="1"/>
</dbReference>
<dbReference type="PROSITE" id="PS51881">
    <property type="entry name" value="OCT"/>
    <property type="match status" value="1"/>
</dbReference>
<proteinExistence type="inferred from homology"/>
<reference key="1">
    <citation type="journal article" date="2006" name="Proc. Natl. Acad. Sci. U.S.A.">
        <title>Comparative genomics of the lactic acid bacteria.</title>
        <authorList>
            <person name="Makarova K.S."/>
            <person name="Slesarev A."/>
            <person name="Wolf Y.I."/>
            <person name="Sorokin A."/>
            <person name="Mirkin B."/>
            <person name="Koonin E.V."/>
            <person name="Pavlov A."/>
            <person name="Pavlova N."/>
            <person name="Karamychev V."/>
            <person name="Polouchine N."/>
            <person name="Shakhova V."/>
            <person name="Grigoriev I."/>
            <person name="Lou Y."/>
            <person name="Rohksar D."/>
            <person name="Lucas S."/>
            <person name="Huang K."/>
            <person name="Goodstein D.M."/>
            <person name="Hawkins T."/>
            <person name="Plengvidhya V."/>
            <person name="Welker D."/>
            <person name="Hughes J."/>
            <person name="Goh Y."/>
            <person name="Benson A."/>
            <person name="Baldwin K."/>
            <person name="Lee J.-H."/>
            <person name="Diaz-Muniz I."/>
            <person name="Dosti B."/>
            <person name="Smeianov V."/>
            <person name="Wechter W."/>
            <person name="Barabote R."/>
            <person name="Lorca G."/>
            <person name="Altermann E."/>
            <person name="Barrangou R."/>
            <person name="Ganesan B."/>
            <person name="Xie Y."/>
            <person name="Rawsthorne H."/>
            <person name="Tamir D."/>
            <person name="Parker C."/>
            <person name="Breidt F."/>
            <person name="Broadbent J.R."/>
            <person name="Hutkins R."/>
            <person name="O'Sullivan D."/>
            <person name="Steele J."/>
            <person name="Unlu G."/>
            <person name="Saier M.H. Jr."/>
            <person name="Klaenhammer T."/>
            <person name="Richardson P."/>
            <person name="Kozyavkin S."/>
            <person name="Weimer B.C."/>
            <person name="Mills D.A."/>
        </authorList>
    </citation>
    <scope>NUCLEOTIDE SEQUENCE [LARGE SCALE GENOMIC DNA]</scope>
    <source>
        <strain>ATCC 33323 / DSM 20243 / BCRC 14619 / CIP 102991 / JCM 1131 / KCTC 3163 / NCIMB 11718 / NCTC 13722 / AM63</strain>
    </source>
</reference>
<accession>Q043W1</accession>
<protein>
    <recommendedName>
        <fullName evidence="1">GTPase Obg</fullName>
        <ecNumber evidence="1">3.6.5.-</ecNumber>
    </recommendedName>
    <alternativeName>
        <fullName evidence="1">GTP-binding protein Obg</fullName>
    </alternativeName>
</protein>
<name>OBG_LACGA</name>
<gene>
    <name evidence="1" type="primary">obg</name>
    <name type="ordered locus">LGAS_0872</name>
</gene>
<keyword id="KW-0963">Cytoplasm</keyword>
<keyword id="KW-0342">GTP-binding</keyword>
<keyword id="KW-0378">Hydrolase</keyword>
<keyword id="KW-0460">Magnesium</keyword>
<keyword id="KW-0479">Metal-binding</keyword>
<keyword id="KW-0547">Nucleotide-binding</keyword>
<sequence>MFVDQTKIDVQAGKGGDGAVAFRHEKYVPLGGPAGGDGGRGGSIILVADSGLRTLMDFRFRRKFKADNGENGRIKSQYGRGAKDVRLKVPMGTSVYDFNTGELLGDLVKNGQELVVARGGKGGIGNIHFATPTRTAPEIAENGEPGEFRTLRLELKVLADVGLVGFPSVGKSTLLSVVTKAKPKIAAYEFTTLTPNLGMVVLPDGRDFSMADLPGLIEGASKGVGLGIQFLRHVERTKVILHLVSMDPNNGRDAYEDYETIRKELAGYTKDLTSKKELIVATQMDIPGSEEKLAEFKKKLGDKTVYPISSVTHQGVSELMGKTADLVEEVAKEEAEKPAEIKVAEKEYVYKKPEDDGFKVERTGEHSFIVTGNKLERLVQRTNLDHTDGIMLLARKLKRMGVDDALREKGAVNGDDVSIADFTFEFVD</sequence>
<evidence type="ECO:0000255" key="1">
    <source>
        <dbReference type="HAMAP-Rule" id="MF_01454"/>
    </source>
</evidence>
<evidence type="ECO:0000255" key="2">
    <source>
        <dbReference type="PROSITE-ProRule" id="PRU01229"/>
    </source>
</evidence>
<evidence type="ECO:0000255" key="3">
    <source>
        <dbReference type="PROSITE-ProRule" id="PRU01231"/>
    </source>
</evidence>
<comment type="function">
    <text evidence="1">An essential GTPase which binds GTP, GDP and possibly (p)ppGpp with moderate affinity, with high nucleotide exchange rates and a fairly low GTP hydrolysis rate. Plays a role in control of the cell cycle, stress response, ribosome biogenesis and in those bacteria that undergo differentiation, in morphogenesis control.</text>
</comment>
<comment type="cofactor">
    <cofactor evidence="1">
        <name>Mg(2+)</name>
        <dbReference type="ChEBI" id="CHEBI:18420"/>
    </cofactor>
</comment>
<comment type="subunit">
    <text evidence="1">Monomer.</text>
</comment>
<comment type="subcellular location">
    <subcellularLocation>
        <location evidence="1">Cytoplasm</location>
    </subcellularLocation>
</comment>
<comment type="similarity">
    <text evidence="1">Belongs to the TRAFAC class OBG-HflX-like GTPase superfamily. OBG GTPase family.</text>
</comment>
<feature type="chain" id="PRO_0000385996" description="GTPase Obg">
    <location>
        <begin position="1"/>
        <end position="428"/>
    </location>
</feature>
<feature type="domain" description="Obg" evidence="3">
    <location>
        <begin position="1"/>
        <end position="158"/>
    </location>
</feature>
<feature type="domain" description="OBG-type G" evidence="1">
    <location>
        <begin position="159"/>
        <end position="328"/>
    </location>
</feature>
<feature type="domain" description="OCT" evidence="2">
    <location>
        <begin position="350"/>
        <end position="428"/>
    </location>
</feature>
<feature type="binding site" evidence="1">
    <location>
        <begin position="165"/>
        <end position="172"/>
    </location>
    <ligand>
        <name>GTP</name>
        <dbReference type="ChEBI" id="CHEBI:37565"/>
    </ligand>
</feature>
<feature type="binding site" evidence="1">
    <location>
        <position position="172"/>
    </location>
    <ligand>
        <name>Mg(2+)</name>
        <dbReference type="ChEBI" id="CHEBI:18420"/>
    </ligand>
</feature>
<feature type="binding site" evidence="1">
    <location>
        <begin position="190"/>
        <end position="194"/>
    </location>
    <ligand>
        <name>GTP</name>
        <dbReference type="ChEBI" id="CHEBI:37565"/>
    </ligand>
</feature>
<feature type="binding site" evidence="1">
    <location>
        <position position="192"/>
    </location>
    <ligand>
        <name>Mg(2+)</name>
        <dbReference type="ChEBI" id="CHEBI:18420"/>
    </ligand>
</feature>
<feature type="binding site" evidence="1">
    <location>
        <begin position="212"/>
        <end position="215"/>
    </location>
    <ligand>
        <name>GTP</name>
        <dbReference type="ChEBI" id="CHEBI:37565"/>
    </ligand>
</feature>
<feature type="binding site" evidence="1">
    <location>
        <begin position="282"/>
        <end position="285"/>
    </location>
    <ligand>
        <name>GTP</name>
        <dbReference type="ChEBI" id="CHEBI:37565"/>
    </ligand>
</feature>
<feature type="binding site" evidence="1">
    <location>
        <begin position="309"/>
        <end position="311"/>
    </location>
    <ligand>
        <name>GTP</name>
        <dbReference type="ChEBI" id="CHEBI:37565"/>
    </ligand>
</feature>